<feature type="chain" id="PRO_0000196742" description="Putative phosphoenolpyruvate synthase regulatory protein">
    <location>
        <begin position="1"/>
        <end position="273"/>
    </location>
</feature>
<feature type="binding site" evidence="1">
    <location>
        <begin position="153"/>
        <end position="160"/>
    </location>
    <ligand>
        <name>ADP</name>
        <dbReference type="ChEBI" id="CHEBI:456216"/>
    </ligand>
</feature>
<name>PSRP_XANAC</name>
<proteinExistence type="inferred from homology"/>
<keyword id="KW-0418">Kinase</keyword>
<keyword id="KW-0547">Nucleotide-binding</keyword>
<keyword id="KW-0723">Serine/threonine-protein kinase</keyword>
<keyword id="KW-0808">Transferase</keyword>
<evidence type="ECO:0000255" key="1">
    <source>
        <dbReference type="HAMAP-Rule" id="MF_01062"/>
    </source>
</evidence>
<reference key="1">
    <citation type="journal article" date="2002" name="Nature">
        <title>Comparison of the genomes of two Xanthomonas pathogens with differing host specificities.</title>
        <authorList>
            <person name="da Silva A.C.R."/>
            <person name="Ferro J.A."/>
            <person name="Reinach F.C."/>
            <person name="Farah C.S."/>
            <person name="Furlan L.R."/>
            <person name="Quaggio R.B."/>
            <person name="Monteiro-Vitorello C.B."/>
            <person name="Van Sluys M.A."/>
            <person name="Almeida N.F. Jr."/>
            <person name="Alves L.M.C."/>
            <person name="do Amaral A.M."/>
            <person name="Bertolini M.C."/>
            <person name="Camargo L.E.A."/>
            <person name="Camarotte G."/>
            <person name="Cannavan F."/>
            <person name="Cardozo J."/>
            <person name="Chambergo F."/>
            <person name="Ciapina L.P."/>
            <person name="Cicarelli R.M.B."/>
            <person name="Coutinho L.L."/>
            <person name="Cursino-Santos J.R."/>
            <person name="El-Dorry H."/>
            <person name="Faria J.B."/>
            <person name="Ferreira A.J.S."/>
            <person name="Ferreira R.C.C."/>
            <person name="Ferro M.I.T."/>
            <person name="Formighieri E.F."/>
            <person name="Franco M.C."/>
            <person name="Greggio C.C."/>
            <person name="Gruber A."/>
            <person name="Katsuyama A.M."/>
            <person name="Kishi L.T."/>
            <person name="Leite R.P."/>
            <person name="Lemos E.G.M."/>
            <person name="Lemos M.V.F."/>
            <person name="Locali E.C."/>
            <person name="Machado M.A."/>
            <person name="Madeira A.M.B.N."/>
            <person name="Martinez-Rossi N.M."/>
            <person name="Martins E.C."/>
            <person name="Meidanis J."/>
            <person name="Menck C.F.M."/>
            <person name="Miyaki C.Y."/>
            <person name="Moon D.H."/>
            <person name="Moreira L.M."/>
            <person name="Novo M.T.M."/>
            <person name="Okura V.K."/>
            <person name="Oliveira M.C."/>
            <person name="Oliveira V.R."/>
            <person name="Pereira H.A."/>
            <person name="Rossi A."/>
            <person name="Sena J.A.D."/>
            <person name="Silva C."/>
            <person name="de Souza R.F."/>
            <person name="Spinola L.A.F."/>
            <person name="Takita M.A."/>
            <person name="Tamura R.E."/>
            <person name="Teixeira E.C."/>
            <person name="Tezza R.I.D."/>
            <person name="Trindade dos Santos M."/>
            <person name="Truffi D."/>
            <person name="Tsai S.M."/>
            <person name="White F.F."/>
            <person name="Setubal J.C."/>
            <person name="Kitajima J.P."/>
        </authorList>
    </citation>
    <scope>NUCLEOTIDE SEQUENCE [LARGE SCALE GENOMIC DNA]</scope>
    <source>
        <strain>306</strain>
    </source>
</reference>
<organism>
    <name type="scientific">Xanthomonas axonopodis pv. citri (strain 306)</name>
    <dbReference type="NCBI Taxonomy" id="190486"/>
    <lineage>
        <taxon>Bacteria</taxon>
        <taxon>Pseudomonadati</taxon>
        <taxon>Pseudomonadota</taxon>
        <taxon>Gammaproteobacteria</taxon>
        <taxon>Lysobacterales</taxon>
        <taxon>Lysobacteraceae</taxon>
        <taxon>Xanthomonas</taxon>
    </lineage>
</organism>
<dbReference type="EC" id="2.7.11.33" evidence="1"/>
<dbReference type="EC" id="2.7.4.28" evidence="1"/>
<dbReference type="EMBL" id="AE008923">
    <property type="protein sequence ID" value="AAM36904.1"/>
    <property type="molecule type" value="Genomic_DNA"/>
</dbReference>
<dbReference type="RefSeq" id="WP_003482830.1">
    <property type="nucleotide sequence ID" value="NC_003919.1"/>
</dbReference>
<dbReference type="SMR" id="Q8PKW5"/>
<dbReference type="KEGG" id="xac:XAC2042"/>
<dbReference type="eggNOG" id="COG1806">
    <property type="taxonomic scope" value="Bacteria"/>
</dbReference>
<dbReference type="HOGENOM" id="CLU_046206_1_0_6"/>
<dbReference type="Proteomes" id="UP000000576">
    <property type="component" value="Chromosome"/>
</dbReference>
<dbReference type="GO" id="GO:0043531">
    <property type="term" value="F:ADP binding"/>
    <property type="evidence" value="ECO:0007669"/>
    <property type="project" value="UniProtKB-UniRule"/>
</dbReference>
<dbReference type="GO" id="GO:0005524">
    <property type="term" value="F:ATP binding"/>
    <property type="evidence" value="ECO:0007669"/>
    <property type="project" value="InterPro"/>
</dbReference>
<dbReference type="GO" id="GO:0016776">
    <property type="term" value="F:phosphotransferase activity, phosphate group as acceptor"/>
    <property type="evidence" value="ECO:0007669"/>
    <property type="project" value="UniProtKB-UniRule"/>
</dbReference>
<dbReference type="GO" id="GO:0004674">
    <property type="term" value="F:protein serine/threonine kinase activity"/>
    <property type="evidence" value="ECO:0007669"/>
    <property type="project" value="UniProtKB-UniRule"/>
</dbReference>
<dbReference type="HAMAP" id="MF_01062">
    <property type="entry name" value="PSRP"/>
    <property type="match status" value="1"/>
</dbReference>
<dbReference type="InterPro" id="IPR005177">
    <property type="entry name" value="Kinase-pyrophosphorylase"/>
</dbReference>
<dbReference type="InterPro" id="IPR026530">
    <property type="entry name" value="PSRP"/>
</dbReference>
<dbReference type="NCBIfam" id="NF003742">
    <property type="entry name" value="PRK05339.1"/>
    <property type="match status" value="1"/>
</dbReference>
<dbReference type="PANTHER" id="PTHR31756">
    <property type="entry name" value="PYRUVATE, PHOSPHATE DIKINASE REGULATORY PROTEIN 1, CHLOROPLASTIC"/>
    <property type="match status" value="1"/>
</dbReference>
<dbReference type="PANTHER" id="PTHR31756:SF3">
    <property type="entry name" value="PYRUVATE, PHOSPHATE DIKINASE REGULATORY PROTEIN 1, CHLOROPLASTIC"/>
    <property type="match status" value="1"/>
</dbReference>
<dbReference type="Pfam" id="PF03618">
    <property type="entry name" value="Kinase-PPPase"/>
    <property type="match status" value="1"/>
</dbReference>
<accession>Q8PKW5</accession>
<sequence>MSTIRPVFYVSDGTGITAETIGHSLLTQFSGFNFVTDRMSFIDDADKARDAAMRVRAAGERYQVRPVVVNSCVDPQLSMILAESGALMLDVFAPFIEPLERELNAPRHSRVGRAHGMVDFETYHRRINAMNFALSHDDGIALNYDEADVILVAVSRAGKTPTCIYLALHYGIRAANYPLTDEDLENEQLPPRLRNYRSKLFGLTIDPERLQQIRQERRANSRYSAAETCRREVAIAERMFQMERIPSLSTTNTSIEEISSKVLSTLGLQREMF</sequence>
<comment type="function">
    <text evidence="1">Bifunctional serine/threonine kinase and phosphorylase involved in the regulation of the phosphoenolpyruvate synthase (PEPS) by catalyzing its phosphorylation/dephosphorylation.</text>
</comment>
<comment type="catalytic activity">
    <reaction evidence="1">
        <text>[pyruvate, water dikinase] + ADP = [pyruvate, water dikinase]-phosphate + AMP + H(+)</text>
        <dbReference type="Rhea" id="RHEA:46020"/>
        <dbReference type="Rhea" id="RHEA-COMP:11425"/>
        <dbReference type="Rhea" id="RHEA-COMP:11426"/>
        <dbReference type="ChEBI" id="CHEBI:15378"/>
        <dbReference type="ChEBI" id="CHEBI:43176"/>
        <dbReference type="ChEBI" id="CHEBI:68546"/>
        <dbReference type="ChEBI" id="CHEBI:456215"/>
        <dbReference type="ChEBI" id="CHEBI:456216"/>
        <dbReference type="EC" id="2.7.11.33"/>
    </reaction>
</comment>
<comment type="catalytic activity">
    <reaction evidence="1">
        <text>[pyruvate, water dikinase]-phosphate + phosphate + H(+) = [pyruvate, water dikinase] + diphosphate</text>
        <dbReference type="Rhea" id="RHEA:48580"/>
        <dbReference type="Rhea" id="RHEA-COMP:11425"/>
        <dbReference type="Rhea" id="RHEA-COMP:11426"/>
        <dbReference type="ChEBI" id="CHEBI:15378"/>
        <dbReference type="ChEBI" id="CHEBI:33019"/>
        <dbReference type="ChEBI" id="CHEBI:43176"/>
        <dbReference type="ChEBI" id="CHEBI:43474"/>
        <dbReference type="ChEBI" id="CHEBI:68546"/>
        <dbReference type="EC" id="2.7.4.28"/>
    </reaction>
</comment>
<comment type="similarity">
    <text evidence="1">Belongs to the pyruvate, phosphate/water dikinase regulatory protein family. PSRP subfamily.</text>
</comment>
<gene>
    <name type="ordered locus">XAC2042</name>
</gene>
<protein>
    <recommendedName>
        <fullName evidence="1">Putative phosphoenolpyruvate synthase regulatory protein</fullName>
        <shortName evidence="1">PEP synthase regulatory protein</shortName>
        <shortName evidence="1">PSRP</shortName>
        <ecNumber evidence="1">2.7.11.33</ecNumber>
        <ecNumber evidence="1">2.7.4.28</ecNumber>
    </recommendedName>
    <alternativeName>
        <fullName evidence="1">Pyruvate, water dikinase regulatory protein</fullName>
    </alternativeName>
</protein>